<accession>D0N607</accession>
<sequence>MLRSFLLIVATVSLFGQCKPLPLATSPVSDAVRAPHRSTHETRFVRTNDEERGATMTLAGVLRDKAQTKQLLTSWLNSGKSVPSVSNKLGLKRMSLEQAIHHENWKALTTFQRMKSKKAKAYAKYGTGYQTEAKTKENLLQWVMRGDSPKEVSSTLGLLGLSRRKIIDHQNYEAFRTFLKYRKQWAEMQGNGFTKLTT</sequence>
<organism>
    <name type="scientific">Phytophthora infestans (strain T30-4)</name>
    <name type="common">Potato late blight agent</name>
    <dbReference type="NCBI Taxonomy" id="403677"/>
    <lineage>
        <taxon>Eukaryota</taxon>
        <taxon>Sar</taxon>
        <taxon>Stramenopiles</taxon>
        <taxon>Oomycota</taxon>
        <taxon>Peronosporales</taxon>
        <taxon>Peronosporaceae</taxon>
        <taxon>Phytophthora</taxon>
    </lineage>
</organism>
<reference key="1">
    <citation type="journal article" date="2009" name="Nature">
        <title>Genome sequence and analysis of the Irish potato famine pathogen Phytophthora infestans.</title>
        <authorList>
            <consortium name="The Broad Institute Genome Sequencing Platform"/>
            <person name="Haas B.J."/>
            <person name="Kamoun S."/>
            <person name="Zody M.C."/>
            <person name="Jiang R.H."/>
            <person name="Handsaker R.E."/>
            <person name="Cano L.M."/>
            <person name="Grabherr M."/>
            <person name="Kodira C.D."/>
            <person name="Raffaele S."/>
            <person name="Torto-Alalibo T."/>
            <person name="Bozkurt T.O."/>
            <person name="Ah-Fong A.M."/>
            <person name="Alvarado L."/>
            <person name="Anderson V.L."/>
            <person name="Armstrong M.R."/>
            <person name="Avrova A."/>
            <person name="Baxter L."/>
            <person name="Beynon J."/>
            <person name="Boevink P.C."/>
            <person name="Bollmann S.R."/>
            <person name="Bos J.I."/>
            <person name="Bulone V."/>
            <person name="Cai G."/>
            <person name="Cakir C."/>
            <person name="Carrington J.C."/>
            <person name="Chawner M."/>
            <person name="Conti L."/>
            <person name="Costanzo S."/>
            <person name="Ewan R."/>
            <person name="Fahlgren N."/>
            <person name="Fischbach M.A."/>
            <person name="Fugelstad J."/>
            <person name="Gilroy E.M."/>
            <person name="Gnerre S."/>
            <person name="Green P.J."/>
            <person name="Grenville-Briggs L.J."/>
            <person name="Griffith J."/>
            <person name="Grunwald N.J."/>
            <person name="Horn K."/>
            <person name="Horner N.R."/>
            <person name="Hu C.H."/>
            <person name="Huitema E."/>
            <person name="Jeong D.H."/>
            <person name="Jones A.M."/>
            <person name="Jones J.D."/>
            <person name="Jones R.W."/>
            <person name="Karlsson E.K."/>
            <person name="Kunjeti S.G."/>
            <person name="Lamour K."/>
            <person name="Liu Z."/>
            <person name="Ma L."/>
            <person name="Maclean D."/>
            <person name="Chibucos M.C."/>
            <person name="McDonald H."/>
            <person name="McWalters J."/>
            <person name="Meijer H.J."/>
            <person name="Morgan W."/>
            <person name="Morris P.F."/>
            <person name="Munro C.A."/>
            <person name="O'Neill K."/>
            <person name="Ospina-Giraldo M."/>
            <person name="Pinzon A."/>
            <person name="Pritchard L."/>
            <person name="Ramsahoye B."/>
            <person name="Ren Q."/>
            <person name="Restrepo S."/>
            <person name="Roy S."/>
            <person name="Sadanandom A."/>
            <person name="Savidor A."/>
            <person name="Schornack S."/>
            <person name="Schwartz D.C."/>
            <person name="Schumann U.D."/>
            <person name="Schwessinger B."/>
            <person name="Seyer L."/>
            <person name="Sharpe T."/>
            <person name="Silvar C."/>
            <person name="Song J."/>
            <person name="Studholme D.J."/>
            <person name="Sykes S."/>
            <person name="Thines M."/>
            <person name="van de Vondervoort P.J."/>
            <person name="Phuntumart V."/>
            <person name="Wawra S."/>
            <person name="Weide R."/>
            <person name="Win J."/>
            <person name="Young C."/>
            <person name="Zhou S."/>
            <person name="Fry W."/>
            <person name="Meyers B.C."/>
            <person name="van West P."/>
            <person name="Ristaino J."/>
            <person name="Govers F."/>
            <person name="Birch P.R."/>
            <person name="Whisson S.C."/>
            <person name="Judelson H.S."/>
            <person name="Nusbaum C."/>
        </authorList>
    </citation>
    <scope>NUCLEOTIDE SEQUENCE [LARGE SCALE GENOMIC DNA]</scope>
    <source>
        <strain>T30-4</strain>
    </source>
</reference>
<reference key="2">
    <citation type="journal article" date="2017" name="BMC Genomics">
        <title>RNA-seq of life stages of the oomycete Phytophthora infestans reveals dynamic changes in metabolic, signal transduction, and pathogenesis genes and a major role for calcium signaling in development.</title>
        <authorList>
            <person name="Ah-Fong A.M."/>
            <person name="Kim K.S."/>
            <person name="Judelson H.S."/>
        </authorList>
    </citation>
    <scope>INDUCTION</scope>
</reference>
<reference key="3">
    <citation type="journal article" date="2017" name="Front. Plant Sci.">
        <title>Conserved RXLR effector genes of Phytophthora infestans expressed at the early stage of potato infection are suppressive to host defense.</title>
        <authorList>
            <person name="Yin J."/>
            <person name="Gu B."/>
            <person name="Huang G."/>
            <person name="Tian Y."/>
            <person name="Quan J."/>
            <person name="Lindqvist-Kreuze H."/>
            <person name="Shan W."/>
        </authorList>
    </citation>
    <scope>INDUCTION</scope>
    <scope>FUNCTION</scope>
    <scope>DOMAIN</scope>
</reference>
<reference key="4">
    <citation type="journal article" date="2019" name="J. Exp. Bot.">
        <title>Phytophthora infestans RXLR effectors act in concert at diverse subcellular locations to enhance host colonization.</title>
        <authorList>
            <person name="Wang S."/>
            <person name="McLellan H."/>
            <person name="Bukharova T."/>
            <person name="He Q."/>
            <person name="Murphy F."/>
            <person name="Shi J."/>
            <person name="Sun S."/>
            <person name="van Weymers P."/>
            <person name="Ren Y."/>
            <person name="Thilliez G."/>
            <person name="Wang H."/>
            <person name="Chen X."/>
            <person name="Engelhardt S."/>
            <person name="Vleeshouwers V."/>
            <person name="Gilroy E.M."/>
            <person name="Whisson S.C."/>
            <person name="Hein I."/>
            <person name="Wang X."/>
            <person name="Tian Z."/>
            <person name="Birch P.R.J."/>
            <person name="Boevink P.C."/>
        </authorList>
    </citation>
    <scope>SUBCELLULAR LOCATION</scope>
    <scope>FUNCTION</scope>
</reference>
<name>CRE4_PHYIT</name>
<keyword id="KW-1035">Host cytoplasm</keyword>
<keyword id="KW-1048">Host nucleus</keyword>
<keyword id="KW-1185">Reference proteome</keyword>
<keyword id="KW-0964">Secreted</keyword>
<keyword id="KW-0732">Signal</keyword>
<evidence type="ECO:0000255" key="1"/>
<evidence type="ECO:0000269" key="2">
    <source>
    </source>
</evidence>
<evidence type="ECO:0000269" key="3">
    <source>
    </source>
</evidence>
<evidence type="ECO:0000269" key="4">
    <source>
    </source>
</evidence>
<evidence type="ECO:0000303" key="5">
    <source>
    </source>
</evidence>
<evidence type="ECO:0000303" key="6">
    <source>
    </source>
</evidence>
<evidence type="ECO:0000305" key="7"/>
<evidence type="ECO:0000305" key="8">
    <source>
    </source>
</evidence>
<protein>
    <recommendedName>
        <fullName evidence="6">RxLR effector protein CRE4</fullName>
    </recommendedName>
    <alternativeName>
        <fullName evidence="5">Core RXLR effector 4</fullName>
    </alternativeName>
</protein>
<gene>
    <name type="primary">CRE4</name>
    <name type="ORF">PITG_05910</name>
</gene>
<proteinExistence type="evidence at transcript level"/>
<comment type="function">
    <text evidence="3 4">Effector that is involved in host plant infection. Contributes to virulence during the early infection stage, by inhibiting plant defense responses induced by both PAMP-triggered immunity (PTI) and effector-triggered immunity (ETI).</text>
</comment>
<comment type="subcellular location">
    <subcellularLocation>
        <location evidence="4">Secreted</location>
    </subcellularLocation>
    <subcellularLocation>
        <location evidence="4">Host cytoplasm</location>
    </subcellularLocation>
    <subcellularLocation>
        <location evidence="4">Host nucleus</location>
        <location evidence="4">Host nucleolus</location>
    </subcellularLocation>
    <subcellularLocation>
        <location evidence="4">Host nucleus</location>
    </subcellularLocation>
</comment>
<comment type="induction">
    <text evidence="2 3">Expression is induced during host plant infection.</text>
</comment>
<comment type="domain">
    <text evidence="8">The RxLR-dEER motif acts to carry the protein into the host cell cytoplasm through binding to cell surface phosphatidylinositol-3-phosphate.</text>
</comment>
<comment type="similarity">
    <text evidence="7">Belongs to the RxLR effector family.</text>
</comment>
<dbReference type="EMBL" id="DS028126">
    <property type="protein sequence ID" value="EEY70498.1"/>
    <property type="molecule type" value="Genomic_DNA"/>
</dbReference>
<dbReference type="RefSeq" id="XP_002998152.1">
    <property type="nucleotide sequence ID" value="XM_002998106.1"/>
</dbReference>
<dbReference type="SMR" id="D0N607"/>
<dbReference type="STRING" id="403677.D0N607"/>
<dbReference type="EnsemblProtists" id="PITG_05910T0">
    <property type="protein sequence ID" value="PITG_05910T0"/>
    <property type="gene ID" value="PITG_05910"/>
</dbReference>
<dbReference type="GeneID" id="9472119"/>
<dbReference type="KEGG" id="pif:PITG_05910"/>
<dbReference type="VEuPathDB" id="FungiDB:PITG_05910"/>
<dbReference type="eggNOG" id="ENOG502RGQG">
    <property type="taxonomic scope" value="Eukaryota"/>
</dbReference>
<dbReference type="HOGENOM" id="CLU_122622_0_0_1"/>
<dbReference type="InParanoid" id="D0N607"/>
<dbReference type="OMA" id="WAVEGKS"/>
<dbReference type="OrthoDB" id="124027at2759"/>
<dbReference type="Proteomes" id="UP000006643">
    <property type="component" value="Partially assembled WGS sequence"/>
</dbReference>
<dbReference type="GO" id="GO:0005576">
    <property type="term" value="C:extracellular region"/>
    <property type="evidence" value="ECO:0007669"/>
    <property type="project" value="UniProtKB-SubCell"/>
</dbReference>
<dbReference type="GO" id="GO:0030430">
    <property type="term" value="C:host cell cytoplasm"/>
    <property type="evidence" value="ECO:0007669"/>
    <property type="project" value="UniProtKB-SubCell"/>
</dbReference>
<dbReference type="GO" id="GO:0044196">
    <property type="term" value="C:host cell nucleolus"/>
    <property type="evidence" value="ECO:0007669"/>
    <property type="project" value="UniProtKB-SubCell"/>
</dbReference>
<feature type="signal peptide" evidence="1">
    <location>
        <begin position="1"/>
        <end position="20"/>
    </location>
</feature>
<feature type="chain" id="PRO_5003011722" description="RxLR effector protein CRE4">
    <location>
        <begin position="21"/>
        <end position="198"/>
    </location>
</feature>
<feature type="short sequence motif" description="RxLR-dEER" evidence="8">
    <location>
        <begin position="43"/>
        <end position="52"/>
    </location>
</feature>